<accession>P56011</accession>
<organism>
    <name type="scientific">Helicobacter pylori (strain ATCC 700392 / 26695)</name>
    <name type="common">Campylobacter pylori</name>
    <dbReference type="NCBI Taxonomy" id="85962"/>
    <lineage>
        <taxon>Bacteria</taxon>
        <taxon>Pseudomonadati</taxon>
        <taxon>Campylobacterota</taxon>
        <taxon>Epsilonproteobacteria</taxon>
        <taxon>Campylobacterales</taxon>
        <taxon>Helicobacteraceae</taxon>
        <taxon>Helicobacter</taxon>
    </lineage>
</organism>
<feature type="chain" id="PRO_0000132393" description="Small ribosomal subunit protein uS4">
    <location>
        <begin position="1"/>
        <end position="208"/>
    </location>
</feature>
<feature type="domain" description="S4 RNA-binding" evidence="1">
    <location>
        <begin position="98"/>
        <end position="160"/>
    </location>
</feature>
<feature type="region of interest" description="Disordered" evidence="2">
    <location>
        <begin position="31"/>
        <end position="51"/>
    </location>
</feature>
<keyword id="KW-1185">Reference proteome</keyword>
<keyword id="KW-0687">Ribonucleoprotein</keyword>
<keyword id="KW-0689">Ribosomal protein</keyword>
<keyword id="KW-0694">RNA-binding</keyword>
<keyword id="KW-0699">rRNA-binding</keyword>
<comment type="function">
    <text evidence="1">One of the primary rRNA binding proteins, it binds directly to 16S rRNA where it nucleates assembly of the body of the 30S subunit.</text>
</comment>
<comment type="function">
    <text evidence="1">With S5 and S12 plays an important role in translational accuracy.</text>
</comment>
<comment type="subunit">
    <text evidence="1">Part of the 30S ribosomal subunit. Contacts protein S5. The interaction surface between S4 and S5 is involved in control of translational fidelity.</text>
</comment>
<comment type="similarity">
    <text evidence="1">Belongs to the universal ribosomal protein uS4 family.</text>
</comment>
<proteinExistence type="inferred from homology"/>
<sequence length="208" mass="23965">MARYRGAVERLERRFGVSLALKGERRLSGKSALDKRAYGPGQHGQRRAKTSDYGLQLKEKQKAKMMYGISEKQFRSIFVEANRLDGNTGENLIRLIERRLDNVVYRMGFATTRSSARQLVTHGHVLVDGKRLDIPSYFVRSGQKIEIKEKTKSNSQVVRAMELTAQTGIVPWIDVEKDKKYGIFTRYPEREEVVVPIEERLIVELYSK</sequence>
<evidence type="ECO:0000255" key="1">
    <source>
        <dbReference type="HAMAP-Rule" id="MF_01306"/>
    </source>
</evidence>
<evidence type="ECO:0000256" key="2">
    <source>
        <dbReference type="SAM" id="MobiDB-lite"/>
    </source>
</evidence>
<evidence type="ECO:0000305" key="3"/>
<name>RS4_HELPY</name>
<protein>
    <recommendedName>
        <fullName evidence="1">Small ribosomal subunit protein uS4</fullName>
    </recommendedName>
    <alternativeName>
        <fullName evidence="3">30S ribosomal protein S4</fullName>
    </alternativeName>
</protein>
<dbReference type="EMBL" id="AE000511">
    <property type="protein sequence ID" value="AAD08337.1"/>
    <property type="molecule type" value="Genomic_DNA"/>
</dbReference>
<dbReference type="PIR" id="F64681">
    <property type="entry name" value="F64681"/>
</dbReference>
<dbReference type="RefSeq" id="NP_208086.1">
    <property type="nucleotide sequence ID" value="NC_000915.1"/>
</dbReference>
<dbReference type="RefSeq" id="WP_000135250.1">
    <property type="nucleotide sequence ID" value="NC_018939.1"/>
</dbReference>
<dbReference type="SMR" id="P56011"/>
<dbReference type="DIP" id="DIP-3324N"/>
<dbReference type="FunCoup" id="P56011">
    <property type="interactions" value="457"/>
</dbReference>
<dbReference type="IntAct" id="P56011">
    <property type="interactions" value="6"/>
</dbReference>
<dbReference type="MINT" id="P56011"/>
<dbReference type="STRING" id="85962.HP_1294"/>
<dbReference type="PaxDb" id="85962-C694_06685"/>
<dbReference type="EnsemblBacteria" id="AAD08337">
    <property type="protein sequence ID" value="AAD08337"/>
    <property type="gene ID" value="HP_1294"/>
</dbReference>
<dbReference type="KEGG" id="heo:C694_06685"/>
<dbReference type="KEGG" id="hpy:HP_1294"/>
<dbReference type="PATRIC" id="fig|85962.47.peg.1388"/>
<dbReference type="eggNOG" id="COG0522">
    <property type="taxonomic scope" value="Bacteria"/>
</dbReference>
<dbReference type="InParanoid" id="P56011"/>
<dbReference type="OrthoDB" id="9803672at2"/>
<dbReference type="PhylomeDB" id="P56011"/>
<dbReference type="Proteomes" id="UP000000429">
    <property type="component" value="Chromosome"/>
</dbReference>
<dbReference type="GO" id="GO:0015935">
    <property type="term" value="C:small ribosomal subunit"/>
    <property type="evidence" value="ECO:0000318"/>
    <property type="project" value="GO_Central"/>
</dbReference>
<dbReference type="GO" id="GO:0019843">
    <property type="term" value="F:rRNA binding"/>
    <property type="evidence" value="ECO:0000318"/>
    <property type="project" value="GO_Central"/>
</dbReference>
<dbReference type="GO" id="GO:0003735">
    <property type="term" value="F:structural constituent of ribosome"/>
    <property type="evidence" value="ECO:0000318"/>
    <property type="project" value="GO_Central"/>
</dbReference>
<dbReference type="GO" id="GO:0042274">
    <property type="term" value="P:ribosomal small subunit biogenesis"/>
    <property type="evidence" value="ECO:0000318"/>
    <property type="project" value="GO_Central"/>
</dbReference>
<dbReference type="GO" id="GO:0006412">
    <property type="term" value="P:translation"/>
    <property type="evidence" value="ECO:0007669"/>
    <property type="project" value="UniProtKB-UniRule"/>
</dbReference>
<dbReference type="CDD" id="cd00165">
    <property type="entry name" value="S4"/>
    <property type="match status" value="1"/>
</dbReference>
<dbReference type="FunFam" id="1.10.1050.10:FF:000001">
    <property type="entry name" value="30S ribosomal protein S4"/>
    <property type="match status" value="1"/>
</dbReference>
<dbReference type="FunFam" id="3.10.290.10:FF:000001">
    <property type="entry name" value="30S ribosomal protein S4"/>
    <property type="match status" value="1"/>
</dbReference>
<dbReference type="Gene3D" id="1.10.1050.10">
    <property type="entry name" value="Ribosomal Protein S4 Delta 41, Chain A, domain 1"/>
    <property type="match status" value="1"/>
</dbReference>
<dbReference type="Gene3D" id="3.10.290.10">
    <property type="entry name" value="RNA-binding S4 domain"/>
    <property type="match status" value="1"/>
</dbReference>
<dbReference type="HAMAP" id="MF_01306_B">
    <property type="entry name" value="Ribosomal_uS4_B"/>
    <property type="match status" value="1"/>
</dbReference>
<dbReference type="InterPro" id="IPR022801">
    <property type="entry name" value="Ribosomal_uS4"/>
</dbReference>
<dbReference type="InterPro" id="IPR005709">
    <property type="entry name" value="Ribosomal_uS4_bac-type"/>
</dbReference>
<dbReference type="InterPro" id="IPR018079">
    <property type="entry name" value="Ribosomal_uS4_CS"/>
</dbReference>
<dbReference type="InterPro" id="IPR001912">
    <property type="entry name" value="Ribosomal_uS4_N"/>
</dbReference>
<dbReference type="InterPro" id="IPR002942">
    <property type="entry name" value="S4_RNA-bd"/>
</dbReference>
<dbReference type="InterPro" id="IPR036986">
    <property type="entry name" value="S4_RNA-bd_sf"/>
</dbReference>
<dbReference type="NCBIfam" id="NF003717">
    <property type="entry name" value="PRK05327.1"/>
    <property type="match status" value="1"/>
</dbReference>
<dbReference type="NCBIfam" id="TIGR01017">
    <property type="entry name" value="rpsD_bact"/>
    <property type="match status" value="1"/>
</dbReference>
<dbReference type="PANTHER" id="PTHR11831">
    <property type="entry name" value="30S 40S RIBOSOMAL PROTEIN"/>
    <property type="match status" value="1"/>
</dbReference>
<dbReference type="PANTHER" id="PTHR11831:SF4">
    <property type="entry name" value="SMALL RIBOSOMAL SUBUNIT PROTEIN US4M"/>
    <property type="match status" value="1"/>
</dbReference>
<dbReference type="Pfam" id="PF00163">
    <property type="entry name" value="Ribosomal_S4"/>
    <property type="match status" value="1"/>
</dbReference>
<dbReference type="Pfam" id="PF01479">
    <property type="entry name" value="S4"/>
    <property type="match status" value="1"/>
</dbReference>
<dbReference type="SMART" id="SM01390">
    <property type="entry name" value="Ribosomal_S4"/>
    <property type="match status" value="1"/>
</dbReference>
<dbReference type="SMART" id="SM00363">
    <property type="entry name" value="S4"/>
    <property type="match status" value="1"/>
</dbReference>
<dbReference type="SUPFAM" id="SSF55174">
    <property type="entry name" value="Alpha-L RNA-binding motif"/>
    <property type="match status" value="1"/>
</dbReference>
<dbReference type="PROSITE" id="PS00632">
    <property type="entry name" value="RIBOSOMAL_S4"/>
    <property type="match status" value="1"/>
</dbReference>
<dbReference type="PROSITE" id="PS50889">
    <property type="entry name" value="S4"/>
    <property type="match status" value="1"/>
</dbReference>
<reference key="1">
    <citation type="journal article" date="1997" name="Nature">
        <title>The complete genome sequence of the gastric pathogen Helicobacter pylori.</title>
        <authorList>
            <person name="Tomb J.-F."/>
            <person name="White O."/>
            <person name="Kerlavage A.R."/>
            <person name="Clayton R.A."/>
            <person name="Sutton G.G."/>
            <person name="Fleischmann R.D."/>
            <person name="Ketchum K.A."/>
            <person name="Klenk H.-P."/>
            <person name="Gill S.R."/>
            <person name="Dougherty B.A."/>
            <person name="Nelson K.E."/>
            <person name="Quackenbush J."/>
            <person name="Zhou L."/>
            <person name="Kirkness E.F."/>
            <person name="Peterson S.N."/>
            <person name="Loftus B.J."/>
            <person name="Richardson D.L."/>
            <person name="Dodson R.J."/>
            <person name="Khalak H.G."/>
            <person name="Glodek A."/>
            <person name="McKenney K."/>
            <person name="FitzGerald L.M."/>
            <person name="Lee N."/>
            <person name="Adams M.D."/>
            <person name="Hickey E.K."/>
            <person name="Berg D.E."/>
            <person name="Gocayne J.D."/>
            <person name="Utterback T.R."/>
            <person name="Peterson J.D."/>
            <person name="Kelley J.M."/>
            <person name="Cotton M.D."/>
            <person name="Weidman J.F."/>
            <person name="Fujii C."/>
            <person name="Bowman C."/>
            <person name="Watthey L."/>
            <person name="Wallin E."/>
            <person name="Hayes W.S."/>
            <person name="Borodovsky M."/>
            <person name="Karp P.D."/>
            <person name="Smith H.O."/>
            <person name="Fraser C.M."/>
            <person name="Venter J.C."/>
        </authorList>
    </citation>
    <scope>NUCLEOTIDE SEQUENCE [LARGE SCALE GENOMIC DNA]</scope>
    <source>
        <strain>ATCC 700392 / 26695</strain>
    </source>
</reference>
<gene>
    <name evidence="1" type="primary">rpsD</name>
    <name type="ordered locus">HP_1294</name>
</gene>